<reference key="1">
    <citation type="journal article" date="2002" name="Proc. Natl. Acad. Sci. U.S.A.">
        <title>Genome sequence of Streptococcus mutans UA159, a cariogenic dental pathogen.</title>
        <authorList>
            <person name="Ajdic D.J."/>
            <person name="McShan W.M."/>
            <person name="McLaughlin R.E."/>
            <person name="Savic G."/>
            <person name="Chang J."/>
            <person name="Carson M.B."/>
            <person name="Primeaux C."/>
            <person name="Tian R."/>
            <person name="Kenton S."/>
            <person name="Jia H.G."/>
            <person name="Lin S.P."/>
            <person name="Qian Y."/>
            <person name="Li S."/>
            <person name="Zhu H."/>
            <person name="Najar F.Z."/>
            <person name="Lai H."/>
            <person name="White J."/>
            <person name="Roe B.A."/>
            <person name="Ferretti J.J."/>
        </authorList>
    </citation>
    <scope>NUCLEOTIDE SEQUENCE [LARGE SCALE GENOMIC DNA]</scope>
    <source>
        <strain>ATCC 700610 / UA159</strain>
    </source>
</reference>
<organism>
    <name type="scientific">Streptococcus mutans serotype c (strain ATCC 700610 / UA159)</name>
    <dbReference type="NCBI Taxonomy" id="210007"/>
    <lineage>
        <taxon>Bacteria</taxon>
        <taxon>Bacillati</taxon>
        <taxon>Bacillota</taxon>
        <taxon>Bacilli</taxon>
        <taxon>Lactobacillales</taxon>
        <taxon>Streptococcaceae</taxon>
        <taxon>Streptococcus</taxon>
    </lineage>
</organism>
<name>ARGJ_STRMU</name>
<gene>
    <name evidence="1" type="primary">argJ</name>
    <name type="ordered locus">SMU_664</name>
</gene>
<protein>
    <recommendedName>
        <fullName evidence="1">Arginine biosynthesis bifunctional protein ArgJ</fullName>
    </recommendedName>
    <domain>
        <recommendedName>
            <fullName evidence="1">Glutamate N-acetyltransferase</fullName>
            <ecNumber evidence="1">2.3.1.35</ecNumber>
        </recommendedName>
        <alternativeName>
            <fullName evidence="1">Ornithine acetyltransferase</fullName>
            <shortName evidence="1">OATase</shortName>
        </alternativeName>
        <alternativeName>
            <fullName evidence="1">Ornithine transacetylase</fullName>
        </alternativeName>
    </domain>
    <domain>
        <recommendedName>
            <fullName evidence="1">Amino-acid acetyltransferase</fullName>
            <ecNumber evidence="1">2.3.1.1</ecNumber>
        </recommendedName>
        <alternativeName>
            <fullName evidence="1">N-acetylglutamate synthase</fullName>
            <shortName evidence="1">AGSase</shortName>
        </alternativeName>
    </domain>
    <component>
        <recommendedName>
            <fullName evidence="1">Arginine biosynthesis bifunctional protein ArgJ alpha chain</fullName>
        </recommendedName>
    </component>
    <component>
        <recommendedName>
            <fullName evidence="1">Arginine biosynthesis bifunctional protein ArgJ beta chain</fullName>
        </recommendedName>
    </component>
</protein>
<accession>Q8DV45</accession>
<keyword id="KW-0012">Acyltransferase</keyword>
<keyword id="KW-0028">Amino-acid biosynthesis</keyword>
<keyword id="KW-0055">Arginine biosynthesis</keyword>
<keyword id="KW-0068">Autocatalytic cleavage</keyword>
<keyword id="KW-0963">Cytoplasm</keyword>
<keyword id="KW-0511">Multifunctional enzyme</keyword>
<keyword id="KW-1185">Reference proteome</keyword>
<keyword id="KW-0808">Transferase</keyword>
<proteinExistence type="inferred from homology"/>
<feature type="chain" id="PRO_0000002249" description="Arginine biosynthesis bifunctional protein ArgJ alpha chain" evidence="1">
    <location>
        <begin position="1"/>
        <end position="183"/>
    </location>
</feature>
<feature type="chain" id="PRO_0000002250" description="Arginine biosynthesis bifunctional protein ArgJ beta chain" evidence="1">
    <location>
        <begin position="184"/>
        <end position="397"/>
    </location>
</feature>
<feature type="active site" description="Nucleophile" evidence="1">
    <location>
        <position position="184"/>
    </location>
</feature>
<feature type="binding site" evidence="1">
    <location>
        <position position="147"/>
    </location>
    <ligand>
        <name>substrate</name>
    </ligand>
</feature>
<feature type="binding site" evidence="1">
    <location>
        <position position="173"/>
    </location>
    <ligand>
        <name>substrate</name>
    </ligand>
</feature>
<feature type="binding site" evidence="1">
    <location>
        <position position="184"/>
    </location>
    <ligand>
        <name>substrate</name>
    </ligand>
</feature>
<feature type="binding site" evidence="1">
    <location>
        <position position="270"/>
    </location>
    <ligand>
        <name>substrate</name>
    </ligand>
</feature>
<feature type="binding site" evidence="1">
    <location>
        <position position="392"/>
    </location>
    <ligand>
        <name>substrate</name>
    </ligand>
</feature>
<feature type="binding site" evidence="1">
    <location>
        <position position="397"/>
    </location>
    <ligand>
        <name>substrate</name>
    </ligand>
</feature>
<feature type="site" description="Involved in the stabilization of negative charge on the oxyanion by the formation of the oxyanion hole" evidence="1">
    <location>
        <position position="113"/>
    </location>
</feature>
<feature type="site" description="Involved in the stabilization of negative charge on the oxyanion by the formation of the oxyanion hole" evidence="1">
    <location>
        <position position="114"/>
    </location>
</feature>
<feature type="site" description="Cleavage; by autolysis" evidence="1">
    <location>
        <begin position="183"/>
        <end position="184"/>
    </location>
</feature>
<sequence length="397" mass="42419">MKIIDGNIASPLGFSADGLHAGFKKRKKDFGWIVSEVPASVAGVYTTNKVIAAPLIVTRESVKKAQKMQALVVNSGVANSCTGLQGMEDAYTMQKWTATKLKIAPELVGVASTGVIGDLMPMDTLQKGLSKLVVNGNSDDFAQAILTTDTKVKTVAVTEQFGRDEVTMAGVAKGSGMIHPNMATMLAFITCDAVISSETLQLALSQNVETTFNQITVDGDTSTNDMVLVLSNGCTLNKEILPDTPEFDKFSAMLHFVMQELAKKIAKDGEGATKLIEVEVINAPNSLDACMMAKSVVGSSLVKTAIFGEDPNWGRILAAVGYAGVDVPVDNIDIYLADIPVMLASSPVDFDEEDMQDVMRADTIKIIVDLHAGDSVGKAWGCDLSYDYVKINALYRT</sequence>
<dbReference type="EC" id="2.3.1.35" evidence="1"/>
<dbReference type="EC" id="2.3.1.1" evidence="1"/>
<dbReference type="EMBL" id="AE014133">
    <property type="protein sequence ID" value="AAN58398.1"/>
    <property type="molecule type" value="Genomic_DNA"/>
</dbReference>
<dbReference type="RefSeq" id="NP_721092.1">
    <property type="nucleotide sequence ID" value="NC_004350.2"/>
</dbReference>
<dbReference type="RefSeq" id="WP_002261877.1">
    <property type="nucleotide sequence ID" value="NC_004350.2"/>
</dbReference>
<dbReference type="SMR" id="Q8DV45"/>
<dbReference type="STRING" id="210007.SMU_664"/>
<dbReference type="MEROPS" id="T05.002"/>
<dbReference type="DNASU" id="1028088"/>
<dbReference type="KEGG" id="smu:SMU_664"/>
<dbReference type="PATRIC" id="fig|210007.7.peg.589"/>
<dbReference type="eggNOG" id="COG1364">
    <property type="taxonomic scope" value="Bacteria"/>
</dbReference>
<dbReference type="HOGENOM" id="CLU_027172_1_0_9"/>
<dbReference type="OrthoDB" id="9804242at2"/>
<dbReference type="PhylomeDB" id="Q8DV45"/>
<dbReference type="UniPathway" id="UPA00068">
    <property type="reaction ID" value="UER00106"/>
</dbReference>
<dbReference type="UniPathway" id="UPA00068">
    <property type="reaction ID" value="UER00111"/>
</dbReference>
<dbReference type="Proteomes" id="UP000002512">
    <property type="component" value="Chromosome"/>
</dbReference>
<dbReference type="GO" id="GO:0005737">
    <property type="term" value="C:cytoplasm"/>
    <property type="evidence" value="ECO:0007669"/>
    <property type="project" value="UniProtKB-SubCell"/>
</dbReference>
<dbReference type="GO" id="GO:0004358">
    <property type="term" value="F:glutamate N-acetyltransferase activity"/>
    <property type="evidence" value="ECO:0007669"/>
    <property type="project" value="UniProtKB-UniRule"/>
</dbReference>
<dbReference type="GO" id="GO:0004042">
    <property type="term" value="F:L-glutamate N-acetyltransferase activity"/>
    <property type="evidence" value="ECO:0007669"/>
    <property type="project" value="UniProtKB-UniRule"/>
</dbReference>
<dbReference type="GO" id="GO:0006526">
    <property type="term" value="P:L-arginine biosynthetic process"/>
    <property type="evidence" value="ECO:0007669"/>
    <property type="project" value="UniProtKB-UniRule"/>
</dbReference>
<dbReference type="GO" id="GO:0006592">
    <property type="term" value="P:ornithine biosynthetic process"/>
    <property type="evidence" value="ECO:0007669"/>
    <property type="project" value="TreeGrafter"/>
</dbReference>
<dbReference type="CDD" id="cd02152">
    <property type="entry name" value="OAT"/>
    <property type="match status" value="1"/>
</dbReference>
<dbReference type="FunFam" id="3.10.20.340:FF:000001">
    <property type="entry name" value="Arginine biosynthesis bifunctional protein ArgJ, chloroplastic"/>
    <property type="match status" value="1"/>
</dbReference>
<dbReference type="FunFam" id="3.60.70.12:FF:000001">
    <property type="entry name" value="Arginine biosynthesis bifunctional protein ArgJ, chloroplastic"/>
    <property type="match status" value="1"/>
</dbReference>
<dbReference type="Gene3D" id="3.10.20.340">
    <property type="entry name" value="ArgJ beta chain, C-terminal domain"/>
    <property type="match status" value="1"/>
</dbReference>
<dbReference type="Gene3D" id="3.60.70.12">
    <property type="entry name" value="L-amino peptidase D-ALA esterase/amidase"/>
    <property type="match status" value="1"/>
</dbReference>
<dbReference type="HAMAP" id="MF_01106">
    <property type="entry name" value="ArgJ"/>
    <property type="match status" value="1"/>
</dbReference>
<dbReference type="InterPro" id="IPR002813">
    <property type="entry name" value="Arg_biosynth_ArgJ"/>
</dbReference>
<dbReference type="InterPro" id="IPR016117">
    <property type="entry name" value="ArgJ-like_dom_sf"/>
</dbReference>
<dbReference type="InterPro" id="IPR042195">
    <property type="entry name" value="ArgJ_beta_C"/>
</dbReference>
<dbReference type="NCBIfam" id="TIGR00120">
    <property type="entry name" value="ArgJ"/>
    <property type="match status" value="1"/>
</dbReference>
<dbReference type="NCBIfam" id="NF003802">
    <property type="entry name" value="PRK05388.1"/>
    <property type="match status" value="1"/>
</dbReference>
<dbReference type="PANTHER" id="PTHR23100">
    <property type="entry name" value="ARGININE BIOSYNTHESIS BIFUNCTIONAL PROTEIN ARGJ"/>
    <property type="match status" value="1"/>
</dbReference>
<dbReference type="PANTHER" id="PTHR23100:SF0">
    <property type="entry name" value="ARGININE BIOSYNTHESIS BIFUNCTIONAL PROTEIN ARGJ, MITOCHONDRIAL"/>
    <property type="match status" value="1"/>
</dbReference>
<dbReference type="Pfam" id="PF01960">
    <property type="entry name" value="ArgJ"/>
    <property type="match status" value="1"/>
</dbReference>
<dbReference type="SUPFAM" id="SSF56266">
    <property type="entry name" value="DmpA/ArgJ-like"/>
    <property type="match status" value="1"/>
</dbReference>
<evidence type="ECO:0000255" key="1">
    <source>
        <dbReference type="HAMAP-Rule" id="MF_01106"/>
    </source>
</evidence>
<comment type="function">
    <text evidence="1">Catalyzes two activities which are involved in the cyclic version of arginine biosynthesis: the synthesis of N-acetylglutamate from glutamate and acetyl-CoA as the acetyl donor, and of ornithine by transacetylation between N(2)-acetylornithine and glutamate.</text>
</comment>
<comment type="catalytic activity">
    <reaction evidence="1">
        <text>N(2)-acetyl-L-ornithine + L-glutamate = N-acetyl-L-glutamate + L-ornithine</text>
        <dbReference type="Rhea" id="RHEA:15349"/>
        <dbReference type="ChEBI" id="CHEBI:29985"/>
        <dbReference type="ChEBI" id="CHEBI:44337"/>
        <dbReference type="ChEBI" id="CHEBI:46911"/>
        <dbReference type="ChEBI" id="CHEBI:57805"/>
        <dbReference type="EC" id="2.3.1.35"/>
    </reaction>
</comment>
<comment type="catalytic activity">
    <reaction evidence="1">
        <text>L-glutamate + acetyl-CoA = N-acetyl-L-glutamate + CoA + H(+)</text>
        <dbReference type="Rhea" id="RHEA:24292"/>
        <dbReference type="ChEBI" id="CHEBI:15378"/>
        <dbReference type="ChEBI" id="CHEBI:29985"/>
        <dbReference type="ChEBI" id="CHEBI:44337"/>
        <dbReference type="ChEBI" id="CHEBI:57287"/>
        <dbReference type="ChEBI" id="CHEBI:57288"/>
        <dbReference type="EC" id="2.3.1.1"/>
    </reaction>
</comment>
<comment type="pathway">
    <text evidence="1">Amino-acid biosynthesis; L-arginine biosynthesis; L-ornithine and N-acetyl-L-glutamate from L-glutamate and N(2)-acetyl-L-ornithine (cyclic): step 1/1.</text>
</comment>
<comment type="pathway">
    <text evidence="1">Amino-acid biosynthesis; L-arginine biosynthesis; N(2)-acetyl-L-ornithine from L-glutamate: step 1/4.</text>
</comment>
<comment type="subunit">
    <text evidence="1">Heterotetramer of two alpha and two beta chains.</text>
</comment>
<comment type="subcellular location">
    <subcellularLocation>
        <location evidence="1">Cytoplasm</location>
    </subcellularLocation>
</comment>
<comment type="similarity">
    <text evidence="1">Belongs to the ArgJ family.</text>
</comment>